<organism>
    <name type="scientific">Vaccinia virus (strain Ankara)</name>
    <name type="common">VACV</name>
    <dbReference type="NCBI Taxonomy" id="126794"/>
    <lineage>
        <taxon>Viruses</taxon>
        <taxon>Varidnaviria</taxon>
        <taxon>Bamfordvirae</taxon>
        <taxon>Nucleocytoviricota</taxon>
        <taxon>Pokkesviricetes</taxon>
        <taxon>Chitovirales</taxon>
        <taxon>Poxviridae</taxon>
        <taxon>Chordopoxvirinae</taxon>
        <taxon>Orthopoxvirus</taxon>
        <taxon>Vaccinia virus</taxon>
    </lineage>
</organism>
<feature type="chain" id="PRO_0000055182" description="RNA helicase NPH-II">
    <location>
        <begin position="1"/>
        <end position="676"/>
    </location>
</feature>
<feature type="domain" description="Helicase ATP-binding" evidence="2">
    <location>
        <begin position="172"/>
        <end position="347"/>
    </location>
</feature>
<feature type="domain" description="Helicase C-terminal" evidence="3">
    <location>
        <begin position="366"/>
        <end position="535"/>
    </location>
</feature>
<feature type="short sequence motif" description="DEXH box">
    <location>
        <begin position="296"/>
        <end position="299"/>
    </location>
</feature>
<feature type="binding site" evidence="2">
    <location>
        <begin position="185"/>
        <end position="192"/>
    </location>
    <ligand>
        <name>ATP</name>
        <dbReference type="ChEBI" id="CHEBI:30616"/>
    </ligand>
</feature>
<organismHost>
    <name type="scientific">Homo sapiens</name>
    <name type="common">Human</name>
    <dbReference type="NCBI Taxonomy" id="9606"/>
</organismHost>
<proteinExistence type="evidence at transcript level"/>
<keyword id="KW-0067">ATP-binding</keyword>
<keyword id="KW-0244">Early protein</keyword>
<keyword id="KW-0347">Helicase</keyword>
<keyword id="KW-0378">Hydrolase</keyword>
<keyword id="KW-0426">Late protein</keyword>
<keyword id="KW-0547">Nucleotide-binding</keyword>
<keyword id="KW-0804">Transcription</keyword>
<keyword id="KW-0946">Virion</keyword>
<reference key="1">
    <citation type="journal article" date="1998" name="Virology">
        <title>The complete genomic sequence of the modified vaccinia Ankara strain: comparison with other orthopoxviruses.</title>
        <authorList>
            <person name="Antoine G."/>
            <person name="Scheiflinger F."/>
            <person name="Dorner F."/>
            <person name="Falkner F.G."/>
        </authorList>
    </citation>
    <scope>NUCLEOTIDE SEQUENCE [LARGE SCALE GENOMIC DNA]</scope>
</reference>
<reference key="2">
    <citation type="submission" date="2004-04" db="EMBL/GenBank/DDBJ databases">
        <authorList>
            <person name="Esposito J.J."/>
            <person name="Frace M."/>
            <person name="Sammons S.A."/>
            <person name="Olsen-Rasmussen M.S."/>
            <person name="Osborne J."/>
            <person name="Khristova M."/>
            <person name="Wohlhueter R.M."/>
        </authorList>
    </citation>
    <scope>NUCLEOTIDE SEQUENCE [LARGE SCALE GENOMIC DNA]</scope>
    <source>
        <strain>Isolate Acambis 3000</strain>
    </source>
</reference>
<gene>
    <name type="primary">OPG084</name>
    <name type="synonym">NPH2</name>
    <name type="ordered locus">MVA069R</name>
    <name type="ordered locus">ACAM3000_MVA_069</name>
</gene>
<name>NPH2_VACCA</name>
<dbReference type="EC" id="3.6.4.13"/>
<dbReference type="EMBL" id="U94848">
    <property type="protein sequence ID" value="AAB96491.1"/>
    <property type="molecule type" value="Genomic_DNA"/>
</dbReference>
<dbReference type="EMBL" id="AY603355">
    <property type="protein sequence ID" value="AAT10467.1"/>
    <property type="molecule type" value="Genomic_DNA"/>
</dbReference>
<dbReference type="PIR" id="T37345">
    <property type="entry name" value="T37345"/>
</dbReference>
<dbReference type="SMR" id="O57193"/>
<dbReference type="Proteomes" id="UP000159908">
    <property type="component" value="Segment"/>
</dbReference>
<dbReference type="Proteomes" id="UP000172909">
    <property type="component" value="Segment"/>
</dbReference>
<dbReference type="GO" id="GO:0044423">
    <property type="term" value="C:virion component"/>
    <property type="evidence" value="ECO:0007669"/>
    <property type="project" value="UniProtKB-KW"/>
</dbReference>
<dbReference type="GO" id="GO:0005524">
    <property type="term" value="F:ATP binding"/>
    <property type="evidence" value="ECO:0007669"/>
    <property type="project" value="UniProtKB-KW"/>
</dbReference>
<dbReference type="GO" id="GO:0016887">
    <property type="term" value="F:ATP hydrolysis activity"/>
    <property type="evidence" value="ECO:0007669"/>
    <property type="project" value="RHEA"/>
</dbReference>
<dbReference type="GO" id="GO:0003723">
    <property type="term" value="F:RNA binding"/>
    <property type="evidence" value="ECO:0007669"/>
    <property type="project" value="TreeGrafter"/>
</dbReference>
<dbReference type="GO" id="GO:0003724">
    <property type="term" value="F:RNA helicase activity"/>
    <property type="evidence" value="ECO:0007669"/>
    <property type="project" value="UniProtKB-EC"/>
</dbReference>
<dbReference type="Gene3D" id="3.40.50.300">
    <property type="entry name" value="P-loop containing nucleotide triphosphate hydrolases"/>
    <property type="match status" value="2"/>
</dbReference>
<dbReference type="InterPro" id="IPR011545">
    <property type="entry name" value="DEAD/DEAH_box_helicase_dom"/>
</dbReference>
<dbReference type="InterPro" id="IPR002464">
    <property type="entry name" value="DNA/RNA_helicase_DEAH_CS"/>
</dbReference>
<dbReference type="InterPro" id="IPR014001">
    <property type="entry name" value="Helicase_ATP-bd"/>
</dbReference>
<dbReference type="InterPro" id="IPR001650">
    <property type="entry name" value="Helicase_C-like"/>
</dbReference>
<dbReference type="InterPro" id="IPR021892">
    <property type="entry name" value="NPH-II"/>
</dbReference>
<dbReference type="InterPro" id="IPR027417">
    <property type="entry name" value="P-loop_NTPase"/>
</dbReference>
<dbReference type="PANTHER" id="PTHR18934">
    <property type="entry name" value="ATP-DEPENDENT RNA HELICASE"/>
    <property type="match status" value="1"/>
</dbReference>
<dbReference type="PANTHER" id="PTHR18934:SF99">
    <property type="entry name" value="ATP-DEPENDENT RNA HELICASE DHX37-RELATED"/>
    <property type="match status" value="1"/>
</dbReference>
<dbReference type="Pfam" id="PF00270">
    <property type="entry name" value="DEAD"/>
    <property type="match status" value="1"/>
</dbReference>
<dbReference type="Pfam" id="PF00271">
    <property type="entry name" value="Helicase_C"/>
    <property type="match status" value="1"/>
</dbReference>
<dbReference type="Pfam" id="PF12011">
    <property type="entry name" value="NPH-II"/>
    <property type="match status" value="1"/>
</dbReference>
<dbReference type="SMART" id="SM00487">
    <property type="entry name" value="DEXDc"/>
    <property type="match status" value="1"/>
</dbReference>
<dbReference type="SMART" id="SM00490">
    <property type="entry name" value="HELICc"/>
    <property type="match status" value="1"/>
</dbReference>
<dbReference type="SUPFAM" id="SSF52540">
    <property type="entry name" value="P-loop containing nucleoside triphosphate hydrolases"/>
    <property type="match status" value="1"/>
</dbReference>
<dbReference type="PROSITE" id="PS00690">
    <property type="entry name" value="DEAH_ATP_HELICASE"/>
    <property type="match status" value="1"/>
</dbReference>
<dbReference type="PROSITE" id="PS51192">
    <property type="entry name" value="HELICASE_ATP_BIND_1"/>
    <property type="match status" value="1"/>
</dbReference>
<dbReference type="PROSITE" id="PS51194">
    <property type="entry name" value="HELICASE_CTER"/>
    <property type="match status" value="1"/>
</dbReference>
<evidence type="ECO:0000250" key="1">
    <source>
        <dbReference type="UniProtKB" id="P12927"/>
    </source>
</evidence>
<evidence type="ECO:0000255" key="2">
    <source>
        <dbReference type="PROSITE-ProRule" id="PRU00541"/>
    </source>
</evidence>
<evidence type="ECO:0000255" key="3">
    <source>
        <dbReference type="PROSITE-ProRule" id="PRU00542"/>
    </source>
</evidence>
<evidence type="ECO:0000305" key="4"/>
<sequence>MEKNLPDIFFFPNCVNVFSYKYSQDEFSNMSKTERDSFSLAVFPVIKHRWHNAHVVKHKGIYKVSTEARGKKVSPPSLGKPAHINLTAKQYIYSEHTISFECYSFLKCITNTEINSFDEYILRGLLEAGNSLQIFSNSVGKRTDTIGVLGNKYPFSKIPLASLTPKAQREIFSAWISHRPVVLTGGTGVGKTSQVPKLLLWFNYLFGGFSTLDKITDFHERPVILSLPRIALVRLHSNTILKSLGFKVLDGSPISLRYGSIPEELINKQPKKYGIVFSTHKLSLTKLFSYGTLIIDEVHEHDQIGDIIIAVARKHHTKIDSMFLMTATLEDDRERLKVFLPNPAFIHIPGDTLFKISEVFIHNKINPSSRMAYIEEEKRNLVTAIQMYTPPDGSSGIVFVASVAQCHEYKSYLEKRLPYDMYIIHGKVLDIDEILEKVYSSPNVSIIISTPYLESSVTIRNVTHIYDMGRVFVPAPFGGSQEFISKSMRDQRKGRVGRVNPGTYVYFYDLSYMKSIQRIDSEFLHNYILYANKFNLTLPEDLFIIPTNLDILWRTKEYIDSFDISTETWNKLLSNYYMKMIEYAKLYVLSPILAEELDNFERTGELTSIVQEAILSLNLRIKILNFKHKDDDTYIHFCKILFGVYNGTNATIYYHRPLTGYMNMISDTIFVPVDNN</sequence>
<accession>O57193</accession>
<accession>Q6J3G1</accession>
<comment type="function">
    <text evidence="1">NTP-dependent helicase that catalyzes unidirectional unwinding of 3'tailed duplex RNAs and plays an important role during transcription of early mRNAs, presumably by preventing R-loop formation behind the elongating RNA polymerase. Might also play a role in the export of newly synthesized mRNA chains out of the core into the cytoplasm. Required for replication and propagation of viral particles.</text>
</comment>
<comment type="catalytic activity">
    <reaction evidence="1">
        <text>ATP + H2O = ADP + phosphate + H(+)</text>
        <dbReference type="Rhea" id="RHEA:13065"/>
        <dbReference type="ChEBI" id="CHEBI:15377"/>
        <dbReference type="ChEBI" id="CHEBI:15378"/>
        <dbReference type="ChEBI" id="CHEBI:30616"/>
        <dbReference type="ChEBI" id="CHEBI:43474"/>
        <dbReference type="ChEBI" id="CHEBI:456216"/>
        <dbReference type="EC" id="3.6.4.13"/>
    </reaction>
</comment>
<comment type="subunit">
    <text evidence="1">Monomer.</text>
</comment>
<comment type="subcellular location">
    <subcellularLocation>
        <location evidence="1">Virion</location>
    </subcellularLocation>
    <text evidence="1">Localizes to the virion core.</text>
</comment>
<comment type="induction">
    <text>Expressed both early and late in the viral replicative cycle.</text>
</comment>
<comment type="similarity">
    <text evidence="4">Belongs to the DEAD box helicase family. DEAH subfamily.</text>
</comment>
<protein>
    <recommendedName>
        <fullName>RNA helicase NPH-II</fullName>
        <ecNumber>3.6.4.13</ecNumber>
    </recommendedName>
    <alternativeName>
        <fullName>Nucleoside triphosphatase II</fullName>
        <shortName>NTPase II</shortName>
    </alternativeName>
    <alternativeName>
        <fullName>Nucleoside triphosphate phosphohydrolase II</fullName>
        <shortName>NPH II</shortName>
    </alternativeName>
    <alternativeName>
        <fullName>RNA helicase I8</fullName>
    </alternativeName>
</protein>